<name>KDPA_LISMO</name>
<organism>
    <name type="scientific">Listeria monocytogenes serovar 1/2a (strain ATCC BAA-679 / EGD-e)</name>
    <dbReference type="NCBI Taxonomy" id="169963"/>
    <lineage>
        <taxon>Bacteria</taxon>
        <taxon>Bacillati</taxon>
        <taxon>Bacillota</taxon>
        <taxon>Bacilli</taxon>
        <taxon>Bacillales</taxon>
        <taxon>Listeriaceae</taxon>
        <taxon>Listeria</taxon>
    </lineage>
</organism>
<sequence length="561" mass="59315">MKYIVMQDVFFVVLLLVLAVPLGIYMYKVMIGEKVFLSRVLEPVERFGYRLMGVSEVGMSAKRYAVSVLAFSAVGFVFVMAVLMLQGFLPLNPEGMKGLSFSLAFNTAASFVSNTNWQAYSGETALSYFSQSIGLTVQNFVSAATGIAVLFAVIRGFIWKKQKTVGNFWQDLFRVTLYILLPLSLILALLLVSQGVVQSFADYSVVETLENGAKQLIPLGPAASQIAIKQLGTNGGGFFGANSAFPFENPSSFTNLIEMLAILLIPVALVVMFGRAVKDSKQGRAIMTAMMIVFVIGVVAITISEQFAGPSYQGVATSGSMEGKEVRFGVGGSSLFAASTTAASNGAVNAMHDSLTPLGGLVPMFFMQLGEVIFGGVGSGLYGMIGFIILTVFIAGLLVGRTPEYLGKKIEPYDMKMVCLLILVPPLLTLFGTAVAVMMPSVQASVSASGAHGFSEVLYAFTSMGNNNGSAFAGFAADTTFTNMVGAVMMLLARFIPLVAALYLAQNMAGKSSVAASSGTLSTKNGMFIGLLIGVVVLVGALSFLPALALGPIADFFTTFK</sequence>
<comment type="function">
    <text evidence="1">Part of the high-affinity ATP-driven potassium transport (or Kdp) system, which catalyzes the hydrolysis of ATP coupled with the electrogenic transport of potassium into the cytoplasm. This subunit binds the extracellular potassium ions and delivers the ions to the membrane domain of KdpB through an intramembrane tunnel.</text>
</comment>
<comment type="subunit">
    <text evidence="1">The system is composed of three essential subunits: KdpA, KdpB and KdpC.</text>
</comment>
<comment type="subcellular location">
    <subcellularLocation>
        <location evidence="1">Cell membrane</location>
        <topology evidence="1">Multi-pass membrane protein</topology>
    </subcellularLocation>
</comment>
<comment type="similarity">
    <text evidence="1">Belongs to the KdpA family.</text>
</comment>
<gene>
    <name evidence="1" type="primary">kdpA</name>
    <name type="ordered locus">lmo2682</name>
</gene>
<feature type="chain" id="PRO_0000166505" description="Potassium-transporting ATPase potassium-binding subunit">
    <location>
        <begin position="1"/>
        <end position="561"/>
    </location>
</feature>
<feature type="transmembrane region" description="Helical" evidence="1">
    <location>
        <begin position="4"/>
        <end position="24"/>
    </location>
</feature>
<feature type="transmembrane region" description="Helical" evidence="1">
    <location>
        <begin position="65"/>
        <end position="85"/>
    </location>
</feature>
<feature type="transmembrane region" description="Helical" evidence="1">
    <location>
        <begin position="133"/>
        <end position="153"/>
    </location>
</feature>
<feature type="transmembrane region" description="Helical" evidence="1">
    <location>
        <begin position="177"/>
        <end position="197"/>
    </location>
</feature>
<feature type="transmembrane region" description="Helical" evidence="1">
    <location>
        <begin position="253"/>
        <end position="273"/>
    </location>
</feature>
<feature type="transmembrane region" description="Helical" evidence="1">
    <location>
        <begin position="285"/>
        <end position="305"/>
    </location>
</feature>
<feature type="transmembrane region" description="Helical" evidence="1">
    <location>
        <begin position="380"/>
        <end position="400"/>
    </location>
</feature>
<feature type="transmembrane region" description="Helical" evidence="1">
    <location>
        <begin position="417"/>
        <end position="437"/>
    </location>
</feature>
<feature type="transmembrane region" description="Helical" evidence="1">
    <location>
        <begin position="484"/>
        <end position="504"/>
    </location>
</feature>
<feature type="transmembrane region" description="Helical" evidence="1">
    <location>
        <begin position="528"/>
        <end position="548"/>
    </location>
</feature>
<reference key="1">
    <citation type="journal article" date="2001" name="Science">
        <title>Comparative genomics of Listeria species.</title>
        <authorList>
            <person name="Glaser P."/>
            <person name="Frangeul L."/>
            <person name="Buchrieser C."/>
            <person name="Rusniok C."/>
            <person name="Amend A."/>
            <person name="Baquero F."/>
            <person name="Berche P."/>
            <person name="Bloecker H."/>
            <person name="Brandt P."/>
            <person name="Chakraborty T."/>
            <person name="Charbit A."/>
            <person name="Chetouani F."/>
            <person name="Couve E."/>
            <person name="de Daruvar A."/>
            <person name="Dehoux P."/>
            <person name="Domann E."/>
            <person name="Dominguez-Bernal G."/>
            <person name="Duchaud E."/>
            <person name="Durant L."/>
            <person name="Dussurget O."/>
            <person name="Entian K.-D."/>
            <person name="Fsihi H."/>
            <person name="Garcia-del Portillo F."/>
            <person name="Garrido P."/>
            <person name="Gautier L."/>
            <person name="Goebel W."/>
            <person name="Gomez-Lopez N."/>
            <person name="Hain T."/>
            <person name="Hauf J."/>
            <person name="Jackson D."/>
            <person name="Jones L.-M."/>
            <person name="Kaerst U."/>
            <person name="Kreft J."/>
            <person name="Kuhn M."/>
            <person name="Kunst F."/>
            <person name="Kurapkat G."/>
            <person name="Madueno E."/>
            <person name="Maitournam A."/>
            <person name="Mata Vicente J."/>
            <person name="Ng E."/>
            <person name="Nedjari H."/>
            <person name="Nordsiek G."/>
            <person name="Novella S."/>
            <person name="de Pablos B."/>
            <person name="Perez-Diaz J.-C."/>
            <person name="Purcell R."/>
            <person name="Remmel B."/>
            <person name="Rose M."/>
            <person name="Schlueter T."/>
            <person name="Simoes N."/>
            <person name="Tierrez A."/>
            <person name="Vazquez-Boland J.-A."/>
            <person name="Voss H."/>
            <person name="Wehland J."/>
            <person name="Cossart P."/>
        </authorList>
    </citation>
    <scope>NUCLEOTIDE SEQUENCE [LARGE SCALE GENOMIC DNA]</scope>
    <source>
        <strain>ATCC BAA-679 / EGD-e</strain>
    </source>
</reference>
<protein>
    <recommendedName>
        <fullName evidence="1">Potassium-transporting ATPase potassium-binding subunit</fullName>
    </recommendedName>
    <alternativeName>
        <fullName evidence="1">ATP phosphohydrolase [potassium-transporting] A chain</fullName>
    </alternativeName>
    <alternativeName>
        <fullName evidence="1">Potassium-binding and translocating subunit A</fullName>
    </alternativeName>
    <alternativeName>
        <fullName evidence="1">Potassium-translocating ATPase A chain</fullName>
    </alternativeName>
</protein>
<accession>Q8Y3Z6</accession>
<dbReference type="EMBL" id="AL591984">
    <property type="protein sequence ID" value="CAD00895.1"/>
    <property type="molecule type" value="Genomic_DNA"/>
</dbReference>
<dbReference type="PIR" id="AI1409">
    <property type="entry name" value="AI1409"/>
</dbReference>
<dbReference type="RefSeq" id="NP_466204.1">
    <property type="nucleotide sequence ID" value="NC_003210.1"/>
</dbReference>
<dbReference type="RefSeq" id="WP_003733063.1">
    <property type="nucleotide sequence ID" value="NZ_CP149495.1"/>
</dbReference>
<dbReference type="SMR" id="Q8Y3Z6"/>
<dbReference type="STRING" id="169963.gene:17595399"/>
<dbReference type="PaxDb" id="169963-lmo2682"/>
<dbReference type="EnsemblBacteria" id="CAD00895">
    <property type="protein sequence ID" value="CAD00895"/>
    <property type="gene ID" value="CAD00895"/>
</dbReference>
<dbReference type="GeneID" id="987148"/>
<dbReference type="KEGG" id="lmo:lmo2682"/>
<dbReference type="PATRIC" id="fig|169963.11.peg.2748"/>
<dbReference type="eggNOG" id="COG2060">
    <property type="taxonomic scope" value="Bacteria"/>
</dbReference>
<dbReference type="HOGENOM" id="CLU_018614_3_0_9"/>
<dbReference type="OrthoDB" id="9763796at2"/>
<dbReference type="PhylomeDB" id="Q8Y3Z6"/>
<dbReference type="BioCyc" id="LMON169963:LMO2682-MONOMER"/>
<dbReference type="Proteomes" id="UP000000817">
    <property type="component" value="Chromosome"/>
</dbReference>
<dbReference type="GO" id="GO:0005886">
    <property type="term" value="C:plasma membrane"/>
    <property type="evidence" value="ECO:0000318"/>
    <property type="project" value="GO_Central"/>
</dbReference>
<dbReference type="GO" id="GO:0008556">
    <property type="term" value="F:P-type potassium transmembrane transporter activity"/>
    <property type="evidence" value="ECO:0000318"/>
    <property type="project" value="GO_Central"/>
</dbReference>
<dbReference type="GO" id="GO:0030955">
    <property type="term" value="F:potassium ion binding"/>
    <property type="evidence" value="ECO:0007669"/>
    <property type="project" value="UniProtKB-UniRule"/>
</dbReference>
<dbReference type="GO" id="GO:0071805">
    <property type="term" value="P:potassium ion transmembrane transport"/>
    <property type="evidence" value="ECO:0000318"/>
    <property type="project" value="GO_Central"/>
</dbReference>
<dbReference type="HAMAP" id="MF_00275">
    <property type="entry name" value="KdpA"/>
    <property type="match status" value="1"/>
</dbReference>
<dbReference type="InterPro" id="IPR004623">
    <property type="entry name" value="KdpA"/>
</dbReference>
<dbReference type="NCBIfam" id="TIGR00680">
    <property type="entry name" value="kdpA"/>
    <property type="match status" value="1"/>
</dbReference>
<dbReference type="PANTHER" id="PTHR30607">
    <property type="entry name" value="POTASSIUM-TRANSPORTING ATPASE A CHAIN"/>
    <property type="match status" value="1"/>
</dbReference>
<dbReference type="PANTHER" id="PTHR30607:SF2">
    <property type="entry name" value="POTASSIUM-TRANSPORTING ATPASE POTASSIUM-BINDING SUBUNIT"/>
    <property type="match status" value="1"/>
</dbReference>
<dbReference type="Pfam" id="PF03814">
    <property type="entry name" value="KdpA"/>
    <property type="match status" value="1"/>
</dbReference>
<dbReference type="PIRSF" id="PIRSF001294">
    <property type="entry name" value="K_ATPaseA"/>
    <property type="match status" value="1"/>
</dbReference>
<evidence type="ECO:0000255" key="1">
    <source>
        <dbReference type="HAMAP-Rule" id="MF_00275"/>
    </source>
</evidence>
<keyword id="KW-1003">Cell membrane</keyword>
<keyword id="KW-0406">Ion transport</keyword>
<keyword id="KW-0472">Membrane</keyword>
<keyword id="KW-0630">Potassium</keyword>
<keyword id="KW-0633">Potassium transport</keyword>
<keyword id="KW-1185">Reference proteome</keyword>
<keyword id="KW-0812">Transmembrane</keyword>
<keyword id="KW-1133">Transmembrane helix</keyword>
<keyword id="KW-0813">Transport</keyword>
<proteinExistence type="inferred from homology"/>